<reference key="1">
    <citation type="submission" date="2008-04" db="EMBL/GenBank/DDBJ databases">
        <title>Complete sequence of Yersinia pseudotuberculosis PB1/+.</title>
        <authorList>
            <person name="Copeland A."/>
            <person name="Lucas S."/>
            <person name="Lapidus A."/>
            <person name="Glavina del Rio T."/>
            <person name="Dalin E."/>
            <person name="Tice H."/>
            <person name="Bruce D."/>
            <person name="Goodwin L."/>
            <person name="Pitluck S."/>
            <person name="Munk A.C."/>
            <person name="Brettin T."/>
            <person name="Detter J.C."/>
            <person name="Han C."/>
            <person name="Tapia R."/>
            <person name="Schmutz J."/>
            <person name="Larimer F."/>
            <person name="Land M."/>
            <person name="Hauser L."/>
            <person name="Challacombe J.F."/>
            <person name="Green L."/>
            <person name="Lindler L.E."/>
            <person name="Nikolich M.P."/>
            <person name="Richardson P."/>
        </authorList>
    </citation>
    <scope>NUCLEOTIDE SEQUENCE [LARGE SCALE GENOMIC DNA]</scope>
    <source>
        <strain>PB1/+</strain>
    </source>
</reference>
<protein>
    <recommendedName>
        <fullName evidence="1">Ketol-acid reductoisomerase (NADP(+))</fullName>
        <shortName evidence="1">KARI</shortName>
        <ecNumber evidence="1">1.1.1.86</ecNumber>
    </recommendedName>
    <alternativeName>
        <fullName evidence="1">Acetohydroxy-acid isomeroreductase</fullName>
        <shortName evidence="1">AHIR</shortName>
    </alternativeName>
    <alternativeName>
        <fullName evidence="1">Alpha-keto-beta-hydroxylacyl reductoisomerase</fullName>
    </alternativeName>
    <alternativeName>
        <fullName evidence="1">Ketol-acid reductoisomerase type 2</fullName>
    </alternativeName>
    <alternativeName>
        <fullName evidence="1">Ketol-acid reductoisomerase type II</fullName>
    </alternativeName>
</protein>
<keyword id="KW-0028">Amino-acid biosynthesis</keyword>
<keyword id="KW-0100">Branched-chain amino acid biosynthesis</keyword>
<keyword id="KW-0460">Magnesium</keyword>
<keyword id="KW-0479">Metal-binding</keyword>
<keyword id="KW-0521">NADP</keyword>
<keyword id="KW-0560">Oxidoreductase</keyword>
<keyword id="KW-0677">Repeat</keyword>
<proteinExistence type="inferred from homology"/>
<comment type="function">
    <text evidence="1">Involved in the biosynthesis of branched-chain amino acids (BCAA). Catalyzes an alkyl-migration followed by a ketol-acid reduction of (S)-2-acetolactate (S2AL) to yield (R)-2,3-dihydroxy-isovalerate. In the isomerase reaction, S2AL is rearranged via a Mg-dependent methyl migration to produce 3-hydroxy-3-methyl-2-ketobutyrate (HMKB). In the reductase reaction, this 2-ketoacid undergoes a metal-dependent reduction by NADPH to yield (R)-2,3-dihydroxy-isovalerate.</text>
</comment>
<comment type="catalytic activity">
    <reaction evidence="1">
        <text>(2R)-2,3-dihydroxy-3-methylbutanoate + NADP(+) = (2S)-2-acetolactate + NADPH + H(+)</text>
        <dbReference type="Rhea" id="RHEA:22068"/>
        <dbReference type="ChEBI" id="CHEBI:15378"/>
        <dbReference type="ChEBI" id="CHEBI:49072"/>
        <dbReference type="ChEBI" id="CHEBI:57783"/>
        <dbReference type="ChEBI" id="CHEBI:58349"/>
        <dbReference type="ChEBI" id="CHEBI:58476"/>
        <dbReference type="EC" id="1.1.1.86"/>
    </reaction>
</comment>
<comment type="catalytic activity">
    <reaction evidence="1">
        <text>(2R,3R)-2,3-dihydroxy-3-methylpentanoate + NADP(+) = (S)-2-ethyl-2-hydroxy-3-oxobutanoate + NADPH + H(+)</text>
        <dbReference type="Rhea" id="RHEA:13493"/>
        <dbReference type="ChEBI" id="CHEBI:15378"/>
        <dbReference type="ChEBI" id="CHEBI:49256"/>
        <dbReference type="ChEBI" id="CHEBI:49258"/>
        <dbReference type="ChEBI" id="CHEBI:57783"/>
        <dbReference type="ChEBI" id="CHEBI:58349"/>
        <dbReference type="EC" id="1.1.1.86"/>
    </reaction>
</comment>
<comment type="cofactor">
    <cofactor evidence="1">
        <name>Mg(2+)</name>
        <dbReference type="ChEBI" id="CHEBI:18420"/>
    </cofactor>
    <text evidence="1">Binds 2 magnesium ions per subunit.</text>
</comment>
<comment type="pathway">
    <text evidence="1">Amino-acid biosynthesis; L-isoleucine biosynthesis; L-isoleucine from 2-oxobutanoate: step 2/4.</text>
</comment>
<comment type="pathway">
    <text evidence="1">Amino-acid biosynthesis; L-valine biosynthesis; L-valine from pyruvate: step 2/4.</text>
</comment>
<comment type="similarity">
    <text evidence="1">Belongs to the ketol-acid reductoisomerase family.</text>
</comment>
<organism>
    <name type="scientific">Yersinia pseudotuberculosis serotype IB (strain PB1/+)</name>
    <dbReference type="NCBI Taxonomy" id="502801"/>
    <lineage>
        <taxon>Bacteria</taxon>
        <taxon>Pseudomonadati</taxon>
        <taxon>Pseudomonadota</taxon>
        <taxon>Gammaproteobacteria</taxon>
        <taxon>Enterobacterales</taxon>
        <taxon>Yersiniaceae</taxon>
        <taxon>Yersinia</taxon>
    </lineage>
</organism>
<sequence length="492" mass="53933">MANYFNTLNLRQQLAQLGKCRFMARDEFADEAGYLKGKKVVIVGCGAQGLNQGLNMRDSGLDVAYALRKEAIAEKRASWRKATENGFKVGTYEELIPQADLVVNLTPDKQHSAVVKAVQPLMKEGAALGYSHGFNIVEVGEQVRKDITVVMVAPKCPGTEVREEYKRGFGVPTLIAVHPENDPKGEGMAIAKAWAAATGGHRAGVLESSFVAEVKSDLMGEQTILCGMLQAGSLLCFDKLVSEGTDAAYAEKLIQFGWETITEALKQGGITLMMDRLSNPAKLRAYALSEQLKEIMAPLFQKHMDDIISGAFSSGMMADWANDDVKLLNWREETGRTAFENAPQFEGKISEQEYFDHGVLMIAMVKAGVELAFETMVDSGIIEESAYYESLHELPLIANTIARKRLYEMNVVISDTAEYGNYLFANAAVPLLKEKFMDSLQAGDLGKSIPGSAVDNAQLRDVNEAIRNHPIEAVGHKLRGYMTDMKRIAVAG</sequence>
<feature type="chain" id="PRO_1000191021" description="Ketol-acid reductoisomerase (NADP(+))">
    <location>
        <begin position="1"/>
        <end position="492"/>
    </location>
</feature>
<feature type="domain" description="KARI N-terminal Rossmann" evidence="2">
    <location>
        <begin position="15"/>
        <end position="208"/>
    </location>
</feature>
<feature type="domain" description="KARI C-terminal knotted 1" evidence="3">
    <location>
        <begin position="209"/>
        <end position="344"/>
    </location>
</feature>
<feature type="domain" description="KARI C-terminal knotted 2" evidence="3">
    <location>
        <begin position="345"/>
        <end position="485"/>
    </location>
</feature>
<feature type="active site" evidence="1">
    <location>
        <position position="132"/>
    </location>
</feature>
<feature type="binding site" evidence="1">
    <location>
        <begin position="45"/>
        <end position="48"/>
    </location>
    <ligand>
        <name>NADP(+)</name>
        <dbReference type="ChEBI" id="CHEBI:58349"/>
    </ligand>
</feature>
<feature type="binding site" evidence="1">
    <location>
        <position position="68"/>
    </location>
    <ligand>
        <name>NADP(+)</name>
        <dbReference type="ChEBI" id="CHEBI:58349"/>
    </ligand>
</feature>
<feature type="binding site" evidence="1">
    <location>
        <position position="76"/>
    </location>
    <ligand>
        <name>NADP(+)</name>
        <dbReference type="ChEBI" id="CHEBI:58349"/>
    </ligand>
</feature>
<feature type="binding site" evidence="1">
    <location>
        <position position="78"/>
    </location>
    <ligand>
        <name>NADP(+)</name>
        <dbReference type="ChEBI" id="CHEBI:58349"/>
    </ligand>
</feature>
<feature type="binding site" evidence="1">
    <location>
        <begin position="108"/>
        <end position="110"/>
    </location>
    <ligand>
        <name>NADP(+)</name>
        <dbReference type="ChEBI" id="CHEBI:58349"/>
    </ligand>
</feature>
<feature type="binding site" evidence="1">
    <location>
        <position position="158"/>
    </location>
    <ligand>
        <name>NADP(+)</name>
        <dbReference type="ChEBI" id="CHEBI:58349"/>
    </ligand>
</feature>
<feature type="binding site" evidence="1">
    <location>
        <position position="217"/>
    </location>
    <ligand>
        <name>Mg(2+)</name>
        <dbReference type="ChEBI" id="CHEBI:18420"/>
        <label>1</label>
    </ligand>
</feature>
<feature type="binding site" evidence="1">
    <location>
        <position position="217"/>
    </location>
    <ligand>
        <name>Mg(2+)</name>
        <dbReference type="ChEBI" id="CHEBI:18420"/>
        <label>2</label>
    </ligand>
</feature>
<feature type="binding site" evidence="1">
    <location>
        <position position="221"/>
    </location>
    <ligand>
        <name>Mg(2+)</name>
        <dbReference type="ChEBI" id="CHEBI:18420"/>
        <label>1</label>
    </ligand>
</feature>
<feature type="binding site" evidence="1">
    <location>
        <position position="389"/>
    </location>
    <ligand>
        <name>Mg(2+)</name>
        <dbReference type="ChEBI" id="CHEBI:18420"/>
        <label>2</label>
    </ligand>
</feature>
<feature type="binding site" evidence="1">
    <location>
        <position position="393"/>
    </location>
    <ligand>
        <name>Mg(2+)</name>
        <dbReference type="ChEBI" id="CHEBI:18420"/>
        <label>2</label>
    </ligand>
</feature>
<feature type="binding site" evidence="1">
    <location>
        <position position="414"/>
    </location>
    <ligand>
        <name>substrate</name>
    </ligand>
</feature>
<accession>B2JZH8</accession>
<evidence type="ECO:0000255" key="1">
    <source>
        <dbReference type="HAMAP-Rule" id="MF_00435"/>
    </source>
</evidence>
<evidence type="ECO:0000255" key="2">
    <source>
        <dbReference type="PROSITE-ProRule" id="PRU01197"/>
    </source>
</evidence>
<evidence type="ECO:0000255" key="3">
    <source>
        <dbReference type="PROSITE-ProRule" id="PRU01198"/>
    </source>
</evidence>
<name>ILVC_YERPB</name>
<gene>
    <name evidence="1" type="primary">ilvC</name>
    <name type="ordered locus">YPTS_0154</name>
</gene>
<dbReference type="EC" id="1.1.1.86" evidence="1"/>
<dbReference type="EMBL" id="CP001048">
    <property type="protein sequence ID" value="ACC87151.1"/>
    <property type="molecule type" value="Genomic_DNA"/>
</dbReference>
<dbReference type="RefSeq" id="WP_011191486.1">
    <property type="nucleotide sequence ID" value="NZ_CP009780.1"/>
</dbReference>
<dbReference type="SMR" id="B2JZH8"/>
<dbReference type="GeneID" id="96663628"/>
<dbReference type="KEGG" id="ypb:YPTS_0154"/>
<dbReference type="PATRIC" id="fig|502801.10.peg.3829"/>
<dbReference type="UniPathway" id="UPA00047">
    <property type="reaction ID" value="UER00056"/>
</dbReference>
<dbReference type="UniPathway" id="UPA00049">
    <property type="reaction ID" value="UER00060"/>
</dbReference>
<dbReference type="GO" id="GO:0005829">
    <property type="term" value="C:cytosol"/>
    <property type="evidence" value="ECO:0007669"/>
    <property type="project" value="TreeGrafter"/>
</dbReference>
<dbReference type="GO" id="GO:0004455">
    <property type="term" value="F:ketol-acid reductoisomerase activity"/>
    <property type="evidence" value="ECO:0007669"/>
    <property type="project" value="UniProtKB-UniRule"/>
</dbReference>
<dbReference type="GO" id="GO:0000287">
    <property type="term" value="F:magnesium ion binding"/>
    <property type="evidence" value="ECO:0007669"/>
    <property type="project" value="UniProtKB-UniRule"/>
</dbReference>
<dbReference type="GO" id="GO:0009097">
    <property type="term" value="P:isoleucine biosynthetic process"/>
    <property type="evidence" value="ECO:0007669"/>
    <property type="project" value="UniProtKB-UniRule"/>
</dbReference>
<dbReference type="GO" id="GO:0009099">
    <property type="term" value="P:L-valine biosynthetic process"/>
    <property type="evidence" value="ECO:0007669"/>
    <property type="project" value="UniProtKB-UniRule"/>
</dbReference>
<dbReference type="FunFam" id="1.10.1040.10:FF:000007">
    <property type="entry name" value="Ketol-acid reductoisomerase (NADP(+))"/>
    <property type="match status" value="1"/>
</dbReference>
<dbReference type="FunFam" id="3.40.50.720:FF:000043">
    <property type="entry name" value="Ketol-acid reductoisomerase (NADP(+))"/>
    <property type="match status" value="1"/>
</dbReference>
<dbReference type="Gene3D" id="1.10.1040.10">
    <property type="entry name" value="N-(1-d-carboxylethyl)-l-norvaline Dehydrogenase, domain 2"/>
    <property type="match status" value="1"/>
</dbReference>
<dbReference type="Gene3D" id="3.40.50.720">
    <property type="entry name" value="NAD(P)-binding Rossmann-like Domain"/>
    <property type="match status" value="1"/>
</dbReference>
<dbReference type="HAMAP" id="MF_00435">
    <property type="entry name" value="IlvC"/>
    <property type="match status" value="1"/>
</dbReference>
<dbReference type="InterPro" id="IPR008927">
    <property type="entry name" value="6-PGluconate_DH-like_C_sf"/>
</dbReference>
<dbReference type="InterPro" id="IPR013328">
    <property type="entry name" value="6PGD_dom2"/>
</dbReference>
<dbReference type="InterPro" id="IPR013023">
    <property type="entry name" value="KARI"/>
</dbReference>
<dbReference type="InterPro" id="IPR000506">
    <property type="entry name" value="KARI_C"/>
</dbReference>
<dbReference type="InterPro" id="IPR013116">
    <property type="entry name" value="KARI_N"/>
</dbReference>
<dbReference type="InterPro" id="IPR036291">
    <property type="entry name" value="NAD(P)-bd_dom_sf"/>
</dbReference>
<dbReference type="NCBIfam" id="TIGR00465">
    <property type="entry name" value="ilvC"/>
    <property type="match status" value="1"/>
</dbReference>
<dbReference type="NCBIfam" id="NF003557">
    <property type="entry name" value="PRK05225.1"/>
    <property type="match status" value="1"/>
</dbReference>
<dbReference type="PANTHER" id="PTHR21371">
    <property type="entry name" value="KETOL-ACID REDUCTOISOMERASE, MITOCHONDRIAL"/>
    <property type="match status" value="1"/>
</dbReference>
<dbReference type="PANTHER" id="PTHR21371:SF1">
    <property type="entry name" value="KETOL-ACID REDUCTOISOMERASE, MITOCHONDRIAL"/>
    <property type="match status" value="1"/>
</dbReference>
<dbReference type="Pfam" id="PF01450">
    <property type="entry name" value="KARI_C"/>
    <property type="match status" value="2"/>
</dbReference>
<dbReference type="Pfam" id="PF07991">
    <property type="entry name" value="KARI_N"/>
    <property type="match status" value="1"/>
</dbReference>
<dbReference type="SUPFAM" id="SSF48179">
    <property type="entry name" value="6-phosphogluconate dehydrogenase C-terminal domain-like"/>
    <property type="match status" value="2"/>
</dbReference>
<dbReference type="SUPFAM" id="SSF51735">
    <property type="entry name" value="NAD(P)-binding Rossmann-fold domains"/>
    <property type="match status" value="1"/>
</dbReference>
<dbReference type="PROSITE" id="PS51851">
    <property type="entry name" value="KARI_C"/>
    <property type="match status" value="2"/>
</dbReference>
<dbReference type="PROSITE" id="PS51850">
    <property type="entry name" value="KARI_N"/>
    <property type="match status" value="1"/>
</dbReference>